<feature type="chain" id="PRO_0000440760" description="Hemagglutinin HA1 chain" evidence="1">
    <location>
        <begin position="1"/>
        <end position="351"/>
    </location>
</feature>
<feature type="chain" id="PRO_0000039117" description="Hemagglutinin HA2 chain" evidence="1">
    <location>
        <begin position="352"/>
        <end position="574"/>
    </location>
</feature>
<feature type="topological domain" description="Extracellular" evidence="1">
    <location>
        <begin position="1"/>
        <end position="542"/>
    </location>
</feature>
<feature type="transmembrane region" description="Helical" evidence="1">
    <location>
        <begin position="543"/>
        <end position="563"/>
    </location>
</feature>
<feature type="topological domain" description="Cytoplasmic" evidence="1">
    <location>
        <begin position="564"/>
        <end position="574"/>
    </location>
</feature>
<feature type="site" description="Cleavage; by host" evidence="1">
    <location>
        <begin position="351"/>
        <end position="352"/>
    </location>
</feature>
<feature type="lipid moiety-binding region" description="S-palmitoyl cysteine; by host" evidence="1">
    <location>
        <position position="570"/>
    </location>
</feature>
<feature type="lipid moiety-binding region" description="S-palmitoyl cysteine; by host" evidence="1">
    <location>
        <position position="573"/>
    </location>
</feature>
<feature type="glycosylation site" description="N-linked (GlcNAc...) asparagine; by host" evidence="1">
    <location>
        <position position="30"/>
    </location>
</feature>
<feature type="glycosylation site" description="N-linked (GlcNAc...) asparagine; by host" evidence="1">
    <location>
        <position position="64"/>
    </location>
</feature>
<feature type="glycosylation site" description="N-linked (GlcNAc...) asparagine; by host" evidence="1">
    <location>
        <position position="150"/>
    </location>
</feature>
<feature type="glycosylation site" description="N-linked (GlcNAc...) asparagine; by host" evidence="1">
    <location>
        <position position="170"/>
    </location>
</feature>
<feature type="glycosylation site" description="N-linked (GlcNAc...) asparagine; by host" evidence="1">
    <location>
        <position position="237"/>
    </location>
</feature>
<feature type="glycosylation site" description="N-linked (GlcNAc...) asparagine; by host" evidence="1">
    <location>
        <position position="308"/>
    </location>
</feature>
<feature type="glycosylation site" description="N-linked (GlcNAc...) asparagine; by host" evidence="1">
    <location>
        <position position="337"/>
    </location>
</feature>
<feature type="glycosylation site" description="N-linked (GlcNAc...) asparagine; by host" evidence="1">
    <location>
        <position position="496"/>
    </location>
</feature>
<feature type="glycosylation site" description="N-linked (GlcNAc...) asparagine; by host" evidence="1">
    <location>
        <position position="522"/>
    </location>
</feature>
<feature type="glycosylation site" description="N-linked (GlcNAc...) asparagine; by host" evidence="1">
    <location>
        <position position="535"/>
    </location>
</feature>
<feature type="disulfide bond" description="Interchain (between HA1 and HA2 chains)" evidence="1">
    <location>
        <begin position="9"/>
        <end position="488"/>
    </location>
</feature>
<feature type="disulfide bond" evidence="1">
    <location>
        <begin position="65"/>
        <end position="77"/>
    </location>
</feature>
<feature type="disulfide bond" evidence="1">
    <location>
        <begin position="99"/>
        <end position="148"/>
    </location>
</feature>
<feature type="disulfide bond" evidence="1">
    <location>
        <begin position="495"/>
        <end position="499"/>
    </location>
</feature>
<feature type="non-terminal residue">
    <location>
        <position position="1"/>
    </location>
</feature>
<protein>
    <recommendedName>
        <fullName evidence="1">Hemagglutinin</fullName>
    </recommendedName>
    <component>
        <recommendedName>
            <fullName evidence="1">Hemagglutinin HA1 chain</fullName>
        </recommendedName>
    </component>
    <component>
        <recommendedName>
            <fullName evidence="1">Hemagglutinin HA2 chain</fullName>
        </recommendedName>
    </component>
</protein>
<dbReference type="EMBL" id="K00424">
    <property type="protein sequence ID" value="AAA43701.1"/>
    <property type="status" value="ALT_SEQ"/>
    <property type="molecule type" value="Genomic_RNA"/>
</dbReference>
<dbReference type="PIR" id="A93986">
    <property type="entry name" value="HMIVBM"/>
</dbReference>
<dbReference type="SMR" id="P03461"/>
<dbReference type="GlyCosmos" id="P03461">
    <property type="glycosylation" value="10 sites, No reported glycans"/>
</dbReference>
<dbReference type="ABCD" id="P03461">
    <property type="antibodies" value="2 sequenced antibodies"/>
</dbReference>
<dbReference type="GO" id="GO:0020002">
    <property type="term" value="C:host cell plasma membrane"/>
    <property type="evidence" value="ECO:0007669"/>
    <property type="project" value="UniProtKB-SubCell"/>
</dbReference>
<dbReference type="GO" id="GO:0016020">
    <property type="term" value="C:membrane"/>
    <property type="evidence" value="ECO:0007669"/>
    <property type="project" value="UniProtKB-KW"/>
</dbReference>
<dbReference type="GO" id="GO:0019031">
    <property type="term" value="C:viral envelope"/>
    <property type="evidence" value="ECO:0007669"/>
    <property type="project" value="UniProtKB-KW"/>
</dbReference>
<dbReference type="GO" id="GO:0055036">
    <property type="term" value="C:virion membrane"/>
    <property type="evidence" value="ECO:0007669"/>
    <property type="project" value="UniProtKB-SubCell"/>
</dbReference>
<dbReference type="GO" id="GO:0046789">
    <property type="term" value="F:host cell surface receptor binding"/>
    <property type="evidence" value="ECO:0007669"/>
    <property type="project" value="InterPro"/>
</dbReference>
<dbReference type="GO" id="GO:0075509">
    <property type="term" value="P:endocytosis involved in viral entry into host cell"/>
    <property type="evidence" value="ECO:0007669"/>
    <property type="project" value="UniProtKB-KW"/>
</dbReference>
<dbReference type="GO" id="GO:0039654">
    <property type="term" value="P:fusion of virus membrane with host endosome membrane"/>
    <property type="evidence" value="ECO:0007669"/>
    <property type="project" value="UniProtKB-KW"/>
</dbReference>
<dbReference type="GO" id="GO:0019064">
    <property type="term" value="P:fusion of virus membrane with host plasma membrane"/>
    <property type="evidence" value="ECO:0007669"/>
    <property type="project" value="InterPro"/>
</dbReference>
<dbReference type="GO" id="GO:0019062">
    <property type="term" value="P:virion attachment to host cell"/>
    <property type="evidence" value="ECO:0007669"/>
    <property type="project" value="UniProtKB-KW"/>
</dbReference>
<dbReference type="Gene3D" id="3.90.20.10">
    <property type="match status" value="1"/>
</dbReference>
<dbReference type="Gene3D" id="3.90.209.20">
    <property type="match status" value="1"/>
</dbReference>
<dbReference type="Gene3D" id="2.10.77.10">
    <property type="entry name" value="Hemagglutinin Chain A, Domain 2"/>
    <property type="match status" value="1"/>
</dbReference>
<dbReference type="HAMAP" id="MF_04072">
    <property type="entry name" value="INFV_HEMA"/>
    <property type="match status" value="1"/>
</dbReference>
<dbReference type="InterPro" id="IPR008980">
    <property type="entry name" value="Capsid_hemagglutn"/>
</dbReference>
<dbReference type="InterPro" id="IPR013828">
    <property type="entry name" value="Hemagglutn_HA1_a/b_dom_sf"/>
</dbReference>
<dbReference type="InterPro" id="IPR001364">
    <property type="entry name" value="Hemagglutn_influenz_A/B"/>
</dbReference>
<dbReference type="InterPro" id="IPR000386">
    <property type="entry name" value="Hemagglutn_influenz_B"/>
</dbReference>
<dbReference type="Pfam" id="PF00509">
    <property type="entry name" value="Hemagglutinin"/>
    <property type="match status" value="1"/>
</dbReference>
<dbReference type="PRINTS" id="PR00329">
    <property type="entry name" value="HEMAGGLUTN12"/>
</dbReference>
<dbReference type="PRINTS" id="PR00331">
    <property type="entry name" value="HEMAGGLUTN2"/>
</dbReference>
<dbReference type="SUPFAM" id="SSF58064">
    <property type="entry name" value="Influenza hemagglutinin (stalk)"/>
    <property type="match status" value="1"/>
</dbReference>
<dbReference type="SUPFAM" id="SSF49818">
    <property type="entry name" value="Viral protein domain"/>
    <property type="match status" value="1"/>
</dbReference>
<reference key="1">
    <citation type="journal article" date="1983" name="Proc. Natl. Acad. Sci. U.S.A.">
        <title>Sequential mutations in hemagglutinins of influenza B virus isolates: definition of antigenic domains.</title>
        <authorList>
            <person name="Krystal M."/>
            <person name="Young J.F."/>
            <person name="Palese P."/>
            <person name="Wilson I.A."/>
            <person name="Skehel J.J."/>
            <person name="Wiley D.C."/>
        </authorList>
    </citation>
    <scope>NUCLEOTIDE SEQUENCE [GENOMIC RNA]</scope>
</reference>
<reference key="2">
    <citation type="journal article" date="1984" name="Proc. Natl. Acad. Sci. U.S.A.">
        <authorList>
            <person name="Krystal M."/>
            <person name="Young J.F."/>
            <person name="Palese P."/>
            <person name="Wilson I.A."/>
            <person name="Skehel J.J."/>
            <person name="Wiley D.C."/>
        </authorList>
    </citation>
    <scope>ERRATUM OF PUBMED:6192436</scope>
    <scope>SEQUENCE REVISION</scope>
</reference>
<gene>
    <name evidence="1" type="primary">HA</name>
</gene>
<organismHost>
    <name type="scientific">Homo sapiens</name>
    <name type="common">Human</name>
    <dbReference type="NCBI Taxonomy" id="9606"/>
</organismHost>
<comment type="function">
    <text evidence="1">Binds to sialic acid-containing receptors on the cell surface, bringing about the attachment of the virus particle to the cell. Plays a major role in the determination of host range restriction and virulence. Class I viral fusion protein. Responsible for penetration of the virus into the cell cytoplasm by mediating the fusion of the membrane of the endocytosed virus particle with the endosomal membrane. Low pH in endosomes induce an irreversible conformational change in HA2, releasing the fusion hydrophobic peptide. Several trimers are required to form a competent fusion pore.</text>
</comment>
<comment type="subunit">
    <text evidence="1">Homotrimer of disulfide-linked HA1-HA2.</text>
</comment>
<comment type="subcellular location">
    <subcellularLocation>
        <location evidence="1">Virion membrane</location>
        <topology evidence="1">Single-pass type I membrane protein</topology>
    </subcellularLocation>
    <subcellularLocation>
        <location evidence="1">Host apical cell membrane</location>
        <topology evidence="1">Single-pass type I membrane protein</topology>
    </subcellularLocation>
    <text evidence="1">Targeted to the apical plasma membrane in epithelial polarized cells through a signal present in the transmembrane domain. Associated with glycosphingolipid- and cholesterol-enriched detergent-resistant lipid rafts.</text>
</comment>
<comment type="PTM">
    <text evidence="1">Palmitoylated.</text>
</comment>
<comment type="PTM">
    <text evidence="1">In natural infection, inactive HA is matured into HA1 and HA2 outside the cell by one or more trypsin-like, arginine-specific endoprotease secreted by the bronchial epithelial cells. One identified protease that may be involved in this process is secreted in lungs by club cells.</text>
</comment>
<comment type="miscellaneous">
    <text>Major glycoprotein, comprises over 80% of the envelope proteins present in virus particle.</text>
</comment>
<comment type="miscellaneous">
    <text>The extent of infection into host organism is determined by HA. Influenza viruses bud from the apical surface of polarized epithelial cells (e.g. bronchial epithelial cells) into lumen of lungs and are therefore usually pneumotropic. The reason is that HA is cleaved by tryptase clara which is restricted to lungs. However, HAs of H5 and H7 pantropic avian viruses subtypes can be cleaved by furin and subtilisin-type enzymes, allowing the virus to grow in other organs than lungs.</text>
</comment>
<comment type="miscellaneous">
    <text>The influenza B genome consist of 8 RNA segments. Genetic variation of hemagglutinin and/or neuraminidase genes results in the emergence of new influenza strains. The mechanism of variation can be the result of point mutations or the result of genetic reassortment between segments of two different strains.</text>
</comment>
<comment type="similarity">
    <text evidence="1">Belongs to the influenza viruses hemagglutinin family.</text>
</comment>
<proteinExistence type="inferred from homology"/>
<sequence length="574" mass="62064">VTSNADRICTGITSSNSPHVVKTATQGEVNVTGVIPLTTTPTKSHFANLKGTQTRGKLCPNCLNCTDMDVALGRPKCMGTIPSAKVSILHEVKPVTSGCFPIMHDRTKIRQLPNLLRGYENIRLSTRNVINAETAPGGPYTVGTSGSCPNVTNGKGFFETMAWAVPKNKNKTATNPLTVEVPYICTKGEDQITVWGFHSDDETLMVILYGDSKPQKFTSSANGVTTHYVSQIGGFPNQTEDEGLKQSGRIVVDYIVQKPGKTGTIVYQRGVLLPQKVWCASGRSKVIKGSLPLIGEADCLHEKYGGLNKSKPYYTGEHAKAIGNCPIWVKTPLKLANGTKYRPPAKLLKERGFFGAIAGFLEGGWEGMIAGWHGYTSHGAHGVAVAADLKSTQEAINKITKNLNSLSELEVKNLQRLSGAMDELHNEILELDEKVDDLRADTISSQIELAVLLSNEGIINSEDEHLLALERKLKKMLGPSAVEIGNGCFETKHKCNQTCLDRIAAGTFNAGEFSLPTFDSLNITAASLNDDGLDNHTILLYYSTAASSLAVTLMIAIFIVYMVSRDNVSCSICL</sequence>
<accession>P03461</accession>
<organism>
    <name type="scientific">Influenza B virus (strain B/Maryland/1959)</name>
    <dbReference type="NCBI Taxonomy" id="11537"/>
    <lineage>
        <taxon>Viruses</taxon>
        <taxon>Riboviria</taxon>
        <taxon>Orthornavirae</taxon>
        <taxon>Negarnaviricota</taxon>
        <taxon>Polyploviricotina</taxon>
        <taxon>Insthoviricetes</taxon>
        <taxon>Articulavirales</taxon>
        <taxon>Orthomyxoviridae</taxon>
        <taxon>Betainfluenzavirus</taxon>
        <taxon>Betainfluenzavirus influenzae</taxon>
        <taxon>Influenza B virus</taxon>
    </lineage>
</organism>
<evidence type="ECO:0000255" key="1">
    <source>
        <dbReference type="HAMAP-Rule" id="MF_04072"/>
    </source>
</evidence>
<name>HEMA_INBMD</name>
<keyword id="KW-1015">Disulfide bond</keyword>
<keyword id="KW-1170">Fusion of virus membrane with host endosomal membrane</keyword>
<keyword id="KW-1168">Fusion of virus membrane with host membrane</keyword>
<keyword id="KW-0325">Glycoprotein</keyword>
<keyword id="KW-0348">Hemagglutinin</keyword>
<keyword id="KW-1032">Host cell membrane</keyword>
<keyword id="KW-1043">Host membrane</keyword>
<keyword id="KW-0945">Host-virus interaction</keyword>
<keyword id="KW-0449">Lipoprotein</keyword>
<keyword id="KW-0472">Membrane</keyword>
<keyword id="KW-0564">Palmitate</keyword>
<keyword id="KW-0812">Transmembrane</keyword>
<keyword id="KW-1133">Transmembrane helix</keyword>
<keyword id="KW-1161">Viral attachment to host cell</keyword>
<keyword id="KW-0261">Viral envelope protein</keyword>
<keyword id="KW-1162">Viral penetration into host cytoplasm</keyword>
<keyword id="KW-0946">Virion</keyword>
<keyword id="KW-1164">Virus endocytosis by host</keyword>
<keyword id="KW-1160">Virus entry into host cell</keyword>